<protein>
    <recommendedName>
        <fullName evidence="1">Large ribosomal subunit protein bL28</fullName>
    </recommendedName>
    <alternativeName>
        <fullName evidence="2">50S ribosomal protein L28</fullName>
    </alternativeName>
</protein>
<organism>
    <name type="scientific">Streptococcus pyogenes serotype M49 (strain NZ131)</name>
    <dbReference type="NCBI Taxonomy" id="471876"/>
    <lineage>
        <taxon>Bacteria</taxon>
        <taxon>Bacillati</taxon>
        <taxon>Bacillota</taxon>
        <taxon>Bacilli</taxon>
        <taxon>Lactobacillales</taxon>
        <taxon>Streptococcaceae</taxon>
        <taxon>Streptococcus</taxon>
    </lineage>
</organism>
<reference key="1">
    <citation type="journal article" date="2008" name="J. Bacteriol.">
        <title>Genome sequence of a nephritogenic and highly transformable M49 strain of Streptococcus pyogenes.</title>
        <authorList>
            <person name="McShan W.M."/>
            <person name="Ferretti J.J."/>
            <person name="Karasawa T."/>
            <person name="Suvorov A.N."/>
            <person name="Lin S."/>
            <person name="Qin B."/>
            <person name="Jia H."/>
            <person name="Kenton S."/>
            <person name="Najar F."/>
            <person name="Wu H."/>
            <person name="Scott J."/>
            <person name="Roe B.A."/>
            <person name="Savic D.J."/>
        </authorList>
    </citation>
    <scope>NUCLEOTIDE SEQUENCE [LARGE SCALE GENOMIC DNA]</scope>
    <source>
        <strain>NZ131</strain>
    </source>
</reference>
<evidence type="ECO:0000255" key="1">
    <source>
        <dbReference type="HAMAP-Rule" id="MF_00373"/>
    </source>
</evidence>
<evidence type="ECO:0000305" key="2"/>
<accession>B5XIF6</accession>
<dbReference type="EMBL" id="CP000829">
    <property type="protein sequence ID" value="ACI61818.1"/>
    <property type="molecule type" value="Genomic_DNA"/>
</dbReference>
<dbReference type="SMR" id="B5XIF6"/>
<dbReference type="KEGG" id="soz:Spy49_1558c"/>
<dbReference type="HOGENOM" id="CLU_064548_7_1_9"/>
<dbReference type="Proteomes" id="UP000001039">
    <property type="component" value="Chromosome"/>
</dbReference>
<dbReference type="GO" id="GO:1990904">
    <property type="term" value="C:ribonucleoprotein complex"/>
    <property type="evidence" value="ECO:0007669"/>
    <property type="project" value="UniProtKB-KW"/>
</dbReference>
<dbReference type="GO" id="GO:0005840">
    <property type="term" value="C:ribosome"/>
    <property type="evidence" value="ECO:0007669"/>
    <property type="project" value="UniProtKB-KW"/>
</dbReference>
<dbReference type="GO" id="GO:0003735">
    <property type="term" value="F:structural constituent of ribosome"/>
    <property type="evidence" value="ECO:0007669"/>
    <property type="project" value="InterPro"/>
</dbReference>
<dbReference type="GO" id="GO:0006412">
    <property type="term" value="P:translation"/>
    <property type="evidence" value="ECO:0007669"/>
    <property type="project" value="UniProtKB-UniRule"/>
</dbReference>
<dbReference type="Gene3D" id="2.30.170.40">
    <property type="entry name" value="Ribosomal protein L28/L24"/>
    <property type="match status" value="1"/>
</dbReference>
<dbReference type="HAMAP" id="MF_00373">
    <property type="entry name" value="Ribosomal_bL28"/>
    <property type="match status" value="1"/>
</dbReference>
<dbReference type="InterPro" id="IPR050096">
    <property type="entry name" value="Bacterial_rp_bL28"/>
</dbReference>
<dbReference type="InterPro" id="IPR026569">
    <property type="entry name" value="Ribosomal_bL28"/>
</dbReference>
<dbReference type="InterPro" id="IPR034704">
    <property type="entry name" value="Ribosomal_bL28/bL31-like_sf"/>
</dbReference>
<dbReference type="InterPro" id="IPR001383">
    <property type="entry name" value="Ribosomal_bL28_bact-type"/>
</dbReference>
<dbReference type="InterPro" id="IPR037147">
    <property type="entry name" value="Ribosomal_bL28_sf"/>
</dbReference>
<dbReference type="NCBIfam" id="TIGR00009">
    <property type="entry name" value="L28"/>
    <property type="match status" value="1"/>
</dbReference>
<dbReference type="PANTHER" id="PTHR39080">
    <property type="entry name" value="50S RIBOSOMAL PROTEIN L28"/>
    <property type="match status" value="1"/>
</dbReference>
<dbReference type="PANTHER" id="PTHR39080:SF1">
    <property type="entry name" value="LARGE RIBOSOMAL SUBUNIT PROTEIN BL28A"/>
    <property type="match status" value="1"/>
</dbReference>
<dbReference type="Pfam" id="PF00830">
    <property type="entry name" value="Ribosomal_L28"/>
    <property type="match status" value="1"/>
</dbReference>
<dbReference type="SUPFAM" id="SSF143800">
    <property type="entry name" value="L28p-like"/>
    <property type="match status" value="1"/>
</dbReference>
<sequence length="62" mass="6928">MAKVCYFTGRKTVSGNNRSHAMNQTKRTVKPNLQKVTILVDGKPKKVWASARALKSGKVERI</sequence>
<feature type="chain" id="PRO_1000121697" description="Large ribosomal subunit protein bL28">
    <location>
        <begin position="1"/>
        <end position="62"/>
    </location>
</feature>
<keyword id="KW-0687">Ribonucleoprotein</keyword>
<keyword id="KW-0689">Ribosomal protein</keyword>
<gene>
    <name evidence="1" type="primary">rpmB</name>
    <name type="ordered locus">Spy49_1558c</name>
</gene>
<name>RL28_STRPZ</name>
<proteinExistence type="inferred from homology"/>
<comment type="similarity">
    <text evidence="1">Belongs to the bacterial ribosomal protein bL28 family.</text>
</comment>